<protein>
    <recommendedName>
        <fullName evidence="1">Large ribosomal subunit protein eL43</fullName>
    </recommendedName>
    <alternativeName>
        <fullName>60S ribosomal protein L37a</fullName>
    </alternativeName>
</protein>
<gene>
    <name type="primary">RPL37A</name>
</gene>
<accession>P43209</accession>
<dbReference type="EMBL" id="Z24739">
    <property type="protein sequence ID" value="CAA80864.1"/>
    <property type="molecule type" value="mRNA"/>
</dbReference>
<dbReference type="EMBL" id="L21897">
    <property type="protein sequence ID" value="AAA51421.1"/>
    <property type="molecule type" value="mRNA"/>
</dbReference>
<dbReference type="PIR" id="S34661">
    <property type="entry name" value="S34661"/>
</dbReference>
<dbReference type="SMR" id="P43209"/>
<dbReference type="GO" id="GO:1990904">
    <property type="term" value="C:ribonucleoprotein complex"/>
    <property type="evidence" value="ECO:0007669"/>
    <property type="project" value="UniProtKB-KW"/>
</dbReference>
<dbReference type="GO" id="GO:0005840">
    <property type="term" value="C:ribosome"/>
    <property type="evidence" value="ECO:0007669"/>
    <property type="project" value="UniProtKB-KW"/>
</dbReference>
<dbReference type="GO" id="GO:0003735">
    <property type="term" value="F:structural constituent of ribosome"/>
    <property type="evidence" value="ECO:0007669"/>
    <property type="project" value="InterPro"/>
</dbReference>
<dbReference type="GO" id="GO:0008270">
    <property type="term" value="F:zinc ion binding"/>
    <property type="evidence" value="ECO:0007669"/>
    <property type="project" value="UniProtKB-KW"/>
</dbReference>
<dbReference type="GO" id="GO:0006412">
    <property type="term" value="P:translation"/>
    <property type="evidence" value="ECO:0007669"/>
    <property type="project" value="InterPro"/>
</dbReference>
<dbReference type="FunFam" id="2.20.25.30:FF:000002">
    <property type="entry name" value="60S ribosomal protein L37a"/>
    <property type="match status" value="1"/>
</dbReference>
<dbReference type="Gene3D" id="2.20.25.30">
    <property type="match status" value="1"/>
</dbReference>
<dbReference type="HAMAP" id="MF_00327">
    <property type="entry name" value="Ribosomal_eL43"/>
    <property type="match status" value="1"/>
</dbReference>
<dbReference type="InterPro" id="IPR011331">
    <property type="entry name" value="Ribosomal_eL37/eL43"/>
</dbReference>
<dbReference type="InterPro" id="IPR002674">
    <property type="entry name" value="Ribosomal_eL43"/>
</dbReference>
<dbReference type="InterPro" id="IPR050522">
    <property type="entry name" value="Ribosomal_protein_eL43"/>
</dbReference>
<dbReference type="InterPro" id="IPR011332">
    <property type="entry name" value="Ribosomal_zn-bd"/>
</dbReference>
<dbReference type="NCBIfam" id="TIGR00280">
    <property type="entry name" value="eL43_euk_arch"/>
    <property type="match status" value="1"/>
</dbReference>
<dbReference type="NCBIfam" id="NF003058">
    <property type="entry name" value="PRK03976.1"/>
    <property type="match status" value="1"/>
</dbReference>
<dbReference type="PANTHER" id="PTHR48129">
    <property type="entry name" value="60S RIBOSOMAL PROTEIN L37A"/>
    <property type="match status" value="1"/>
</dbReference>
<dbReference type="PANTHER" id="PTHR48129:SF1">
    <property type="entry name" value="LARGE RIBOSOMAL SUBUNIT PROTEIN EL43"/>
    <property type="match status" value="1"/>
</dbReference>
<dbReference type="Pfam" id="PF01780">
    <property type="entry name" value="Ribosomal_L37ae"/>
    <property type="match status" value="1"/>
</dbReference>
<dbReference type="SUPFAM" id="SSF57829">
    <property type="entry name" value="Zn-binding ribosomal proteins"/>
    <property type="match status" value="1"/>
</dbReference>
<reference key="1">
    <citation type="submission" date="1993-07" db="EMBL/GenBank/DDBJ databases">
        <authorList>
            <person name="Song S."/>
            <person name="Choi Y."/>
        </authorList>
    </citation>
    <scope>NUCLEOTIDE SEQUENCE [MRNA]</scope>
</reference>
<feature type="chain" id="PRO_0000139831" description="Large ribosomal subunit protein eL43">
    <location>
        <begin position="1"/>
        <end position="93"/>
    </location>
</feature>
<feature type="zinc finger region" description="C4-type">
    <location>
        <begin position="39"/>
        <end position="60"/>
    </location>
</feature>
<name>RL37A_BRARR</name>
<evidence type="ECO:0000305" key="1"/>
<keyword id="KW-0479">Metal-binding</keyword>
<keyword id="KW-0687">Ribonucleoprotein</keyword>
<keyword id="KW-0689">Ribosomal protein</keyword>
<keyword id="KW-0862">Zinc</keyword>
<keyword id="KW-0863">Zinc-finger</keyword>
<organism>
    <name type="scientific">Brassica rapa subsp. rapa</name>
    <name type="common">Turnip</name>
    <dbReference type="NCBI Taxonomy" id="51350"/>
    <lineage>
        <taxon>Eukaryota</taxon>
        <taxon>Viridiplantae</taxon>
        <taxon>Streptophyta</taxon>
        <taxon>Embryophyta</taxon>
        <taxon>Tracheophyta</taxon>
        <taxon>Spermatophyta</taxon>
        <taxon>Magnoliopsida</taxon>
        <taxon>eudicotyledons</taxon>
        <taxon>Gunneridae</taxon>
        <taxon>Pentapetalae</taxon>
        <taxon>rosids</taxon>
        <taxon>malvids</taxon>
        <taxon>Brassicales</taxon>
        <taxon>Brassicaceae</taxon>
        <taxon>Brassiceae</taxon>
        <taxon>Brassica</taxon>
    </lineage>
</organism>
<proteinExistence type="inferred from homology"/>
<comment type="similarity">
    <text evidence="1">Belongs to the eukaryotic ribosomal protein eL43 family.</text>
</comment>
<sequence>MAKRTKKVGIVGKYGTRYGASIRKQIKKMEVSQHSKYFCEFCGKYGVKRKAVGIWGCKDCGKVKAGGAYTMNTASAVTVRSHTIRRLREQIEG</sequence>